<gene>
    <name type="primary">Ccdc60</name>
</gene>
<proteinExistence type="evidence at transcript level"/>
<dbReference type="EMBL" id="BC103639">
    <property type="protein sequence ID" value="AAI03640.1"/>
    <property type="molecule type" value="mRNA"/>
</dbReference>
<dbReference type="RefSeq" id="NP_001030117.1">
    <property type="nucleotide sequence ID" value="NM_001034945.2"/>
</dbReference>
<dbReference type="SMR" id="Q3ZAV0"/>
<dbReference type="FunCoup" id="Q3ZAV0">
    <property type="interactions" value="11"/>
</dbReference>
<dbReference type="STRING" id="10116.ENSRNOP00000048419"/>
<dbReference type="iPTMnet" id="Q3ZAV0"/>
<dbReference type="PhosphoSitePlus" id="Q3ZAV0"/>
<dbReference type="PaxDb" id="10116-ENSRNOP00000048419"/>
<dbReference type="GeneID" id="498190"/>
<dbReference type="KEGG" id="rno:498190"/>
<dbReference type="UCSC" id="RGD:1564283">
    <property type="organism name" value="rat"/>
</dbReference>
<dbReference type="AGR" id="RGD:1564283"/>
<dbReference type="CTD" id="160777"/>
<dbReference type="RGD" id="1564283">
    <property type="gene designation" value="Ccdc60"/>
</dbReference>
<dbReference type="eggNOG" id="ENOG502QVFX">
    <property type="taxonomic scope" value="Eukaryota"/>
</dbReference>
<dbReference type="HOGENOM" id="CLU_036722_0_0_1"/>
<dbReference type="InParanoid" id="Q3ZAV0"/>
<dbReference type="OrthoDB" id="10017343at2759"/>
<dbReference type="PhylomeDB" id="Q3ZAV0"/>
<dbReference type="PRO" id="PR:Q3ZAV0"/>
<dbReference type="Proteomes" id="UP000002494">
    <property type="component" value="Unplaced"/>
</dbReference>
<dbReference type="InterPro" id="IPR031526">
    <property type="entry name" value="DUF4698"/>
</dbReference>
<dbReference type="PANTHER" id="PTHR34754">
    <property type="entry name" value="COILED-COIL DOMAIN-CONTAINING PROTEIN 60"/>
    <property type="match status" value="1"/>
</dbReference>
<dbReference type="PANTHER" id="PTHR34754:SF1">
    <property type="entry name" value="COILED-COIL DOMAIN-CONTAINING PROTEIN 60"/>
    <property type="match status" value="1"/>
</dbReference>
<dbReference type="Pfam" id="PF15769">
    <property type="entry name" value="DUF4698"/>
    <property type="match status" value="1"/>
</dbReference>
<keyword id="KW-0175">Coiled coil</keyword>
<keyword id="KW-1185">Reference proteome</keyword>
<name>CCD60_RAT</name>
<protein>
    <recommendedName>
        <fullName>Coiled-coil domain-containing protein 60</fullName>
    </recommendedName>
</protein>
<sequence length="542" mass="62503">MTKAPATKKLQRVPSKAIWLFSGSDQLTQASDKTVKSTKSMDKEIVNLKKDLIRSRFLIQCVKIGRGYFTMLQEETAFKKHQQHLKKLQEEELNKFQPAKKYSDIQCRDTLLTTYEYEKMKKLEAGIIIRPFTPIHNCIMAPSLPESHVDPLFRQLCALHWLLEALTIDHTHHTMRPVIACWNPKDPGGSKSTIKKINKDKSMGQRWDHFVTAPKTKKFKAPAIRSLATRKPSRRGSALSLTRTSGGSSPQSSMMSVNPSSDEPTGSKDIEDNESSSTKPEEEVLHFSLQKLLEMVREDARRTILMETEMQKKAPSILSLVKQVKSDYGWKDWQTTHKSSERSSTTSGESHIQVTQKKSKGRANRDIIYCKTGICNTMRAKFYSVAQEAGFCLQDKMEILKKRQEERGLQKFHSFIVTSNFQKDIAKMRHQVSMVKGDAEEMADHWYFDLLSKLPEDLKSFRPAKKILTKLQKFGENLDLRIRPHVLLKVLQDLRIWELCSPDIAVAIEFVREHIIHMPQEDYVNWLQSRVNMPIRHRPILT</sequence>
<evidence type="ECO:0000255" key="1"/>
<evidence type="ECO:0000256" key="2">
    <source>
        <dbReference type="SAM" id="MobiDB-lite"/>
    </source>
</evidence>
<reference key="1">
    <citation type="journal article" date="2004" name="Genome Res.">
        <title>The status, quality, and expansion of the NIH full-length cDNA project: the Mammalian Gene Collection (MGC).</title>
        <authorList>
            <consortium name="The MGC Project Team"/>
        </authorList>
    </citation>
    <scope>NUCLEOTIDE SEQUENCE [LARGE SCALE MRNA]</scope>
    <source>
        <tissue>Testis</tissue>
    </source>
</reference>
<feature type="chain" id="PRO_0000239667" description="Coiled-coil domain-containing protein 60">
    <location>
        <begin position="1"/>
        <end position="542"/>
    </location>
</feature>
<feature type="region of interest" description="Disordered" evidence="2">
    <location>
        <begin position="228"/>
        <end position="284"/>
    </location>
</feature>
<feature type="region of interest" description="Disordered" evidence="2">
    <location>
        <begin position="334"/>
        <end position="358"/>
    </location>
</feature>
<feature type="coiled-coil region" evidence="1">
    <location>
        <begin position="70"/>
        <end position="97"/>
    </location>
</feature>
<feature type="compositionally biased region" description="Low complexity" evidence="2">
    <location>
        <begin position="245"/>
        <end position="261"/>
    </location>
</feature>
<feature type="compositionally biased region" description="Low complexity" evidence="2">
    <location>
        <begin position="342"/>
        <end position="351"/>
    </location>
</feature>
<organism>
    <name type="scientific">Rattus norvegicus</name>
    <name type="common">Rat</name>
    <dbReference type="NCBI Taxonomy" id="10116"/>
    <lineage>
        <taxon>Eukaryota</taxon>
        <taxon>Metazoa</taxon>
        <taxon>Chordata</taxon>
        <taxon>Craniata</taxon>
        <taxon>Vertebrata</taxon>
        <taxon>Euteleostomi</taxon>
        <taxon>Mammalia</taxon>
        <taxon>Eutheria</taxon>
        <taxon>Euarchontoglires</taxon>
        <taxon>Glires</taxon>
        <taxon>Rodentia</taxon>
        <taxon>Myomorpha</taxon>
        <taxon>Muroidea</taxon>
        <taxon>Muridae</taxon>
        <taxon>Murinae</taxon>
        <taxon>Rattus</taxon>
    </lineage>
</organism>
<accession>Q3ZAV0</accession>